<sequence length="422" mass="48689">MIKVYRYEIVKPLDLDWKEFGTILRQLQQETRFALNKATQLAWEWMGFSSDYKDNHGEYPKSKDILGYTNVHGYAYHTIKTKAYRLNSGNLSQTIKRATDRFKAYQKEILRGDMSIPSYKRDIPLDLIKENISVNRMNHGDYIASLSLLSNPAKQEMNVKRKISVIIIVRGAGKTIMDRILSGEYQVSASQIIHDDRKNKWYLNISYDFEPQTRVLDLNKIMGIDLGVAVAVYMAFQHTPARYKLEGGEIENFRRQVESRRISMLRQGKYAGGARGGHGRDKRIKPIEQLRDKIANFRDTTNHRYSRYIVDMAIKEGCGTIQMEDLTNIRDIGSRFLQNWTYYDLQQKIIYKAEEAGIKVIKIDPQYTSQRCSECGNIDSGNRIGQAIFKCRACGYEANADYNAARNIAIPNIDKIIAESIK</sequence>
<keyword id="KW-0002">3D-structure</keyword>
<keyword id="KW-0238">DNA-binding</keyword>
<keyword id="KW-0255">Endonuclease</keyword>
<keyword id="KW-0378">Hydrolase</keyword>
<keyword id="KW-0479">Metal-binding</keyword>
<keyword id="KW-0540">Nuclease</keyword>
<keyword id="KW-1185">Reference proteome</keyword>
<keyword id="KW-0694">RNA-binding</keyword>
<keyword id="KW-0862">Zinc</keyword>
<reference evidence="5" key="1">
    <citation type="submission" date="2016-11" db="EMBL/GenBank/DDBJ databases">
        <title>Comparative genomics of Acidibacillus ferroxidans species.</title>
        <authorList>
            <person name="Oliveira G."/>
            <person name="Nunes G."/>
            <person name="Oliveira R."/>
            <person name="Araujo F."/>
            <person name="Salim A."/>
            <person name="Scholte L."/>
            <person name="Morais D."/>
            <person name="Nancucheo I."/>
            <person name="Johnson D.B."/>
            <person name="Grail B."/>
            <person name="Bittencourt J."/>
            <person name="Valadares R."/>
        </authorList>
    </citation>
    <scope>NUCLEOTIDE SEQUENCE [LARGE SCALE GENOMIC DNA]</scope>
    <source>
        <strain>ATCC TSD-104 / JCM 31946 / Y002</strain>
    </source>
</reference>
<reference key="2">
    <citation type="journal article" date="2020" name="Nucleic Acids Res.">
        <title>PAM recognition by miniature CRISPR-Cas12f nucleases triggers programmable double-stranded DNA target cleavage.</title>
        <authorList>
            <person name="Karvelis T."/>
            <person name="Bigelyte G."/>
            <person name="Young J.K."/>
            <person name="Hou Z."/>
            <person name="Zedaveinyte R."/>
            <person name="Budre K."/>
            <person name="Paulraj S."/>
            <person name="Djukanovic V."/>
            <person name="Gasior S."/>
            <person name="Silanskas A."/>
            <person name="Venclovas C."/>
            <person name="Siksnys V."/>
        </authorList>
    </citation>
    <scope>FUNCTION</scope>
    <scope>CATALYTIC ACTIVITY</scope>
    <scope>BIOTECHNOLOGY</scope>
    <scope>RNA-BINDING</scope>
    <source>
        <strain>ATCC TSD-104 / JCM 31946 / Y002</strain>
    </source>
</reference>
<reference key="3">
    <citation type="journal article" date="2023" name="Nat. Commun.">
        <title>Assessing and advancing the safety of CRISPR-Cas tools: from DNA to RNA editing.</title>
        <authorList>
            <person name="Tao J."/>
            <person name="Bauer D.E."/>
            <person name="Chiarle R."/>
        </authorList>
    </citation>
    <scope>REVIEW ON SAFETY OF GENOME EDITING TOOLS</scope>
</reference>
<comment type="function">
    <text evidence="1 2 4">CRISPR (clustered regularly interspaced short palindromic repeat), is an adaptive immune system that provides protection against mobile genetic elements (viruses, transposable elements and conjugative plasmids). CRISPR clusters contain sequences complementary to antecedent mobile elements and target invading nucleic acids (Probable). CRISPR clusters are transcribed and processed into CRISPR RNA (crRNA), which requires a trans-encoded small RNA (tracrRNA), but not this protein (By similarity). Recognizes a short motif in the CRISPR repeat sequences (the 5' PAM or protospacer adjacent motif, YTT in this organism) to help distinguish self versus nonself, as targets within the CRISPR locus do not have PAMs. Has dsDNA endonuclease activity upon expression in E.coli of this protein, a mini CRISPR array and the probable tracrRNA. Plasmid cleavage is centered around positions 19-24 base pairs 3' of PAM. The mini system protects E.coli against transformation by foreign plasmids (PubMed:32246713).</text>
</comment>
<comment type="cofactor">
    <cofactor evidence="1">
        <name>Mg(2+)</name>
        <dbReference type="ChEBI" id="CHEBI:18420"/>
    </cofactor>
    <text evidence="1">Mg(2+) is required for dsDNA cleavage.</text>
</comment>
<comment type="cofactor">
    <cofactor evidence="1">
        <name>Zn(2+)</name>
        <dbReference type="ChEBI" id="CHEBI:29105"/>
    </cofactor>
</comment>
<comment type="subunit">
    <text evidence="1">An asymmetric homodimer. Guide RNA is probably required for dimerization.</text>
</comment>
<comment type="domain">
    <text evidence="1">Has an asymmetric bilobed structure, with a recognition (REC) lobe and nuclease (NUC) lobe; the sgRNA:target DNA is bound between the 2 lobes. The REC lobe (residues 1-312) is formed by the WED, ZF and REC domains, while the NUC lobe (residues 321-529) is formed by the RuvC and TNB domains. Has a split RuvC-like domain with the nuclease active sites.</text>
</comment>
<comment type="biotechnology">
    <text evidence="2">The small size of this enzyme and its ability to function in E.coli suggests it may be useful for genome editing.</text>
</comment>
<comment type="miscellaneous">
    <text evidence="3">Belongs to a group of putative class 2 CRISPR-Cas systems, type V-U3, which lack the proteins involved in adaptation.</text>
</comment>
<comment type="similarity">
    <text evidence="4">Belongs to the CRISPR-associated endonuclease Cas12f family.</text>
</comment>
<feature type="chain" id="PRO_0000457911" description="CRISPR-associated endodeoxyribonuclease Cas12f1">
    <location>
        <begin position="1"/>
        <end position="422"/>
    </location>
</feature>
<feature type="region of interest" description="Recognition domain (REC)" evidence="1">
    <location>
        <begin position="1"/>
        <end position="126"/>
    </location>
</feature>
<feature type="region of interest" description="Wedge domain (WED)" evidence="1">
    <location>
        <begin position="127"/>
        <end position="211"/>
    </location>
</feature>
<feature type="region of interest" description="Linker" evidence="1">
    <location>
        <begin position="212"/>
        <end position="220"/>
    </location>
</feature>
<feature type="region of interest" description="RuvC-I" evidence="1">
    <location>
        <begin position="221"/>
        <end position="370"/>
    </location>
</feature>
<feature type="region of interest" description="Target nucleic acid-binding (TNB)" evidence="1">
    <location>
        <begin position="371"/>
        <end position="399"/>
    </location>
</feature>
<feature type="region of interest" description="RuvC-II" evidence="1">
    <location>
        <begin position="400"/>
        <end position="420"/>
    </location>
</feature>
<feature type="active site" evidence="1">
    <location>
        <position position="225"/>
    </location>
</feature>
<feature type="active site" evidence="1">
    <location>
        <position position="324"/>
    </location>
</feature>
<feature type="active site" evidence="1">
    <location>
        <position position="401"/>
    </location>
</feature>
<feature type="binding site" evidence="1">
    <location>
        <position position="372"/>
    </location>
    <ligand>
        <name>Zn(2+)</name>
        <dbReference type="ChEBI" id="CHEBI:29105"/>
    </ligand>
</feature>
<feature type="binding site" evidence="1">
    <location>
        <position position="375"/>
    </location>
    <ligand>
        <name>Zn(2+)</name>
        <dbReference type="ChEBI" id="CHEBI:29105"/>
    </ligand>
</feature>
<feature type="binding site" evidence="1">
    <location>
        <position position="391"/>
    </location>
    <ligand>
        <name>Zn(2+)</name>
        <dbReference type="ChEBI" id="CHEBI:29105"/>
    </ligand>
</feature>
<feature type="binding site" evidence="1">
    <location>
        <position position="394"/>
    </location>
    <ligand>
        <name>Zn(2+)</name>
        <dbReference type="ChEBI" id="CHEBI:29105"/>
    </ligand>
</feature>
<feature type="strand" evidence="6">
    <location>
        <begin position="2"/>
        <end position="15"/>
    </location>
</feature>
<feature type="helix" evidence="6">
    <location>
        <begin position="17"/>
        <end position="55"/>
    </location>
</feature>
<feature type="helix" evidence="6">
    <location>
        <begin position="62"/>
        <end position="65"/>
    </location>
</feature>
<feature type="strand" evidence="6">
    <location>
        <begin position="67"/>
        <end position="70"/>
    </location>
</feature>
<feature type="helix" evidence="6">
    <location>
        <begin position="71"/>
        <end position="79"/>
    </location>
</feature>
<feature type="turn" evidence="6">
    <location>
        <begin position="80"/>
        <end position="82"/>
    </location>
</feature>
<feature type="helix" evidence="6">
    <location>
        <begin position="88"/>
        <end position="104"/>
    </location>
</feature>
<feature type="helix" evidence="6">
    <location>
        <begin position="106"/>
        <end position="110"/>
    </location>
</feature>
<feature type="strand" evidence="8">
    <location>
        <begin position="112"/>
        <end position="114"/>
    </location>
</feature>
<feature type="strand" evidence="6">
    <location>
        <begin position="125"/>
        <end position="127"/>
    </location>
</feature>
<feature type="helix" evidence="6">
    <location>
        <begin position="129"/>
        <end position="131"/>
    </location>
</feature>
<feature type="strand" evidence="6">
    <location>
        <begin position="132"/>
        <end position="136"/>
    </location>
</feature>
<feature type="strand" evidence="6">
    <location>
        <begin position="142"/>
        <end position="146"/>
    </location>
</feature>
<feature type="helix" evidence="6">
    <location>
        <begin position="151"/>
        <end position="157"/>
    </location>
</feature>
<feature type="strand" evidence="6">
    <location>
        <begin position="163"/>
        <end position="167"/>
    </location>
</feature>
<feature type="helix" evidence="6">
    <location>
        <begin position="172"/>
        <end position="181"/>
    </location>
</feature>
<feature type="strand" evidence="6">
    <location>
        <begin position="184"/>
        <end position="187"/>
    </location>
</feature>
<feature type="strand" evidence="6">
    <location>
        <begin position="189"/>
        <end position="195"/>
    </location>
</feature>
<feature type="turn" evidence="6">
    <location>
        <begin position="196"/>
        <end position="199"/>
    </location>
</feature>
<feature type="strand" evidence="6">
    <location>
        <begin position="200"/>
        <end position="208"/>
    </location>
</feature>
<feature type="strand" evidence="6">
    <location>
        <begin position="217"/>
        <end position="226"/>
    </location>
</feature>
<feature type="strand" evidence="6">
    <location>
        <begin position="228"/>
        <end position="239"/>
    </location>
</feature>
<feature type="strand" evidence="6">
    <location>
        <begin position="242"/>
        <end position="245"/>
    </location>
</feature>
<feature type="helix" evidence="6">
    <location>
        <begin position="248"/>
        <end position="256"/>
    </location>
</feature>
<feature type="helix" evidence="9">
    <location>
        <begin position="268"/>
        <end position="270"/>
    </location>
</feature>
<feature type="helix" evidence="7">
    <location>
        <begin position="273"/>
        <end position="277"/>
    </location>
</feature>
<feature type="strand" evidence="6">
    <location>
        <begin position="280"/>
        <end position="284"/>
    </location>
</feature>
<feature type="helix" evidence="6">
    <location>
        <begin position="287"/>
        <end position="315"/>
    </location>
</feature>
<feature type="strand" evidence="6">
    <location>
        <begin position="318"/>
        <end position="323"/>
    </location>
</feature>
<feature type="helix" evidence="7">
    <location>
        <begin position="326"/>
        <end position="329"/>
    </location>
</feature>
<feature type="helix" evidence="6">
    <location>
        <begin position="332"/>
        <end position="334"/>
    </location>
</feature>
<feature type="strand" evidence="6">
    <location>
        <begin position="335"/>
        <end position="339"/>
    </location>
</feature>
<feature type="helix" evidence="6">
    <location>
        <begin position="342"/>
        <end position="356"/>
    </location>
</feature>
<feature type="strand" evidence="6">
    <location>
        <begin position="359"/>
        <end position="362"/>
    </location>
</feature>
<feature type="strand" evidence="6">
    <location>
        <begin position="366"/>
        <end position="371"/>
    </location>
</feature>
<feature type="strand" evidence="6">
    <location>
        <begin position="373"/>
        <end position="375"/>
    </location>
</feature>
<feature type="strand" evidence="6">
    <location>
        <begin position="382"/>
        <end position="390"/>
    </location>
</feature>
<feature type="strand" evidence="6">
    <location>
        <begin position="392"/>
        <end position="394"/>
    </location>
</feature>
<feature type="strand" evidence="6">
    <location>
        <begin position="397"/>
        <end position="399"/>
    </location>
</feature>
<feature type="helix" evidence="6">
    <location>
        <begin position="400"/>
        <end position="408"/>
    </location>
</feature>
<feature type="helix" evidence="6">
    <location>
        <begin position="413"/>
        <end position="417"/>
    </location>
</feature>
<feature type="turn" evidence="9">
    <location>
        <begin position="419"/>
        <end position="421"/>
    </location>
</feature>
<organism>
    <name type="scientific">Sulfoacidibacillus thermotolerans</name>
    <name type="common">Acidibacillus sulfuroxidans</name>
    <dbReference type="NCBI Taxonomy" id="1765684"/>
    <lineage>
        <taxon>Bacteria</taxon>
        <taxon>Bacillati</taxon>
        <taxon>Bacillota</taxon>
        <taxon>Bacilli</taxon>
        <taxon>Bacillales</taxon>
        <taxon>Alicyclobacillaceae</taxon>
        <taxon>Sulfoacidibacillus</taxon>
    </lineage>
</organism>
<accession>A0A2U3D0N8</accession>
<evidence type="ECO:0000250" key="1">
    <source>
        <dbReference type="UniProtKB" id="A0A482D308"/>
    </source>
</evidence>
<evidence type="ECO:0000269" key="2">
    <source>
    </source>
</evidence>
<evidence type="ECO:0000303" key="3">
    <source>
    </source>
</evidence>
<evidence type="ECO:0000305" key="4">
    <source>
    </source>
</evidence>
<evidence type="ECO:0000312" key="5">
    <source>
        <dbReference type="EMBL" id="PWI54866.1"/>
    </source>
</evidence>
<evidence type="ECO:0007829" key="6">
    <source>
        <dbReference type="PDB" id="7WJU"/>
    </source>
</evidence>
<evidence type="ECO:0007829" key="7">
    <source>
        <dbReference type="PDB" id="8DZJ"/>
    </source>
</evidence>
<evidence type="ECO:0007829" key="8">
    <source>
        <dbReference type="PDB" id="8J12"/>
    </source>
</evidence>
<evidence type="ECO:0007829" key="9">
    <source>
        <dbReference type="PDB" id="8J1J"/>
    </source>
</evidence>
<dbReference type="EC" id="3.1.-.-" evidence="2"/>
<dbReference type="EMBL" id="MPDK01000047">
    <property type="protein sequence ID" value="PWI54866.1"/>
    <property type="molecule type" value="Genomic_DNA"/>
</dbReference>
<dbReference type="RefSeq" id="WP_109431741.1">
    <property type="nucleotide sequence ID" value="NZ_MPDK01000047.1"/>
</dbReference>
<dbReference type="PDB" id="7WJU">
    <property type="method" value="EM"/>
    <property type="resolution" value="2.69 A"/>
    <property type="chains" value="A/B=1-422"/>
</dbReference>
<dbReference type="PDB" id="8DZJ">
    <property type="method" value="EM"/>
    <property type="resolution" value="2.90 A"/>
    <property type="chains" value="A/B=1-422"/>
</dbReference>
<dbReference type="PDB" id="8J12">
    <property type="method" value="EM"/>
    <property type="resolution" value="3.08 A"/>
    <property type="chains" value="A/B=1-422"/>
</dbReference>
<dbReference type="PDB" id="8J1J">
    <property type="method" value="EM"/>
    <property type="resolution" value="2.91 A"/>
    <property type="chains" value="A/B=1-422"/>
</dbReference>
<dbReference type="PDB" id="8J3R">
    <property type="method" value="EM"/>
    <property type="resolution" value="2.95 A"/>
    <property type="chains" value="A/B=1-422"/>
</dbReference>
<dbReference type="PDBsum" id="7WJU"/>
<dbReference type="PDBsum" id="8DZJ"/>
<dbReference type="PDBsum" id="8J12"/>
<dbReference type="PDBsum" id="8J1J"/>
<dbReference type="PDBsum" id="8J3R"/>
<dbReference type="EMDB" id="EMD-27801"/>
<dbReference type="EMDB" id="EMD-32548"/>
<dbReference type="EMDB" id="EMD-35912"/>
<dbReference type="EMDB" id="EMD-35926"/>
<dbReference type="EMDB" id="EMD-35965"/>
<dbReference type="SMR" id="A0A2U3D0N8"/>
<dbReference type="OrthoDB" id="4278026at2"/>
<dbReference type="Proteomes" id="UP000245380">
    <property type="component" value="Unassembled WGS sequence"/>
</dbReference>
<dbReference type="GO" id="GO:0003677">
    <property type="term" value="F:DNA binding"/>
    <property type="evidence" value="ECO:0007669"/>
    <property type="project" value="UniProtKB-KW"/>
</dbReference>
<dbReference type="GO" id="GO:0004519">
    <property type="term" value="F:endonuclease activity"/>
    <property type="evidence" value="ECO:0007669"/>
    <property type="project" value="UniProtKB-KW"/>
</dbReference>
<dbReference type="GO" id="GO:0046872">
    <property type="term" value="F:metal ion binding"/>
    <property type="evidence" value="ECO:0007669"/>
    <property type="project" value="UniProtKB-KW"/>
</dbReference>
<dbReference type="GO" id="GO:0003723">
    <property type="term" value="F:RNA binding"/>
    <property type="evidence" value="ECO:0007669"/>
    <property type="project" value="UniProtKB-KW"/>
</dbReference>
<dbReference type="InterPro" id="IPR010095">
    <property type="entry name" value="Cas12f1-like_TNB"/>
</dbReference>
<dbReference type="InterPro" id="IPR051399">
    <property type="entry name" value="RNA-guided_DNA_endo/Transpos"/>
</dbReference>
<dbReference type="NCBIfam" id="NF040570">
    <property type="entry name" value="guided_TnpB"/>
    <property type="match status" value="1"/>
</dbReference>
<dbReference type="NCBIfam" id="TIGR01766">
    <property type="entry name" value="IS200/IS605 family accessory protein TnpB-like domain"/>
    <property type="match status" value="1"/>
</dbReference>
<dbReference type="PANTHER" id="PTHR30405:SF11">
    <property type="entry name" value="RNA-GUIDED DNA ENDONUCLEASE RV2885C-RELATED"/>
    <property type="match status" value="1"/>
</dbReference>
<dbReference type="PANTHER" id="PTHR30405">
    <property type="entry name" value="TRANSPOSASE"/>
    <property type="match status" value="1"/>
</dbReference>
<dbReference type="Pfam" id="PF07282">
    <property type="entry name" value="Cas12f1-like_TNB"/>
    <property type="match status" value="1"/>
</dbReference>
<proteinExistence type="evidence at protein level"/>
<name>CS12F_SULT2</name>
<protein>
    <recommendedName>
        <fullName evidence="3">CRISPR-associated endodeoxyribonuclease Cas12f1</fullName>
        <shortName evidence="3">AsCas12f1</shortName>
        <ecNumber evidence="2">3.1.-.-</ecNumber>
    </recommendedName>
    <alternativeName>
        <fullName evidence="3">CRISPR-associated endonuclease C2c10</fullName>
    </alternativeName>
</protein>
<gene>
    <name evidence="3" type="primary">cas12f1</name>
    <name evidence="5" type="ORF">BM613_13600</name>
</gene>